<evidence type="ECO:0000255" key="1">
    <source>
        <dbReference type="HAMAP-Rule" id="MF_00741"/>
    </source>
</evidence>
<proteinExistence type="inferred from homology"/>
<comment type="catalytic activity">
    <reaction evidence="1">
        <text>2-formamido-N(1)-(5-O-phospho-beta-D-ribosyl)acetamidine + ATP = 5-amino-1-(5-phospho-beta-D-ribosyl)imidazole + ADP + phosphate + H(+)</text>
        <dbReference type="Rhea" id="RHEA:23032"/>
        <dbReference type="ChEBI" id="CHEBI:15378"/>
        <dbReference type="ChEBI" id="CHEBI:30616"/>
        <dbReference type="ChEBI" id="CHEBI:43474"/>
        <dbReference type="ChEBI" id="CHEBI:137981"/>
        <dbReference type="ChEBI" id="CHEBI:147287"/>
        <dbReference type="ChEBI" id="CHEBI:456216"/>
        <dbReference type="EC" id="6.3.3.1"/>
    </reaction>
</comment>
<comment type="pathway">
    <text evidence="1">Purine metabolism; IMP biosynthesis via de novo pathway; 5-amino-1-(5-phospho-D-ribosyl)imidazole from N(2)-formyl-N(1)-(5-phospho-D-ribosyl)glycinamide: step 2/2.</text>
</comment>
<comment type="subcellular location">
    <subcellularLocation>
        <location evidence="1">Cytoplasm</location>
    </subcellularLocation>
</comment>
<comment type="similarity">
    <text evidence="1">Belongs to the AIR synthase family.</text>
</comment>
<protein>
    <recommendedName>
        <fullName evidence="1">Phosphoribosylformylglycinamidine cyclo-ligase</fullName>
        <ecNumber evidence="1">6.3.3.1</ecNumber>
    </recommendedName>
    <alternativeName>
        <fullName evidence="1">AIR synthase</fullName>
    </alternativeName>
    <alternativeName>
        <fullName evidence="1">AIRS</fullName>
    </alternativeName>
    <alternativeName>
        <fullName evidence="1">Phosphoribosyl-aminoimidazole synthetase</fullName>
    </alternativeName>
</protein>
<dbReference type="EC" id="6.3.3.1" evidence="1"/>
<dbReference type="EMBL" id="CP001043">
    <property type="protein sequence ID" value="ACC71660.1"/>
    <property type="molecule type" value="Genomic_DNA"/>
</dbReference>
<dbReference type="RefSeq" id="WP_012401864.1">
    <property type="nucleotide sequence ID" value="NC_010622.1"/>
</dbReference>
<dbReference type="SMR" id="B2JGD2"/>
<dbReference type="STRING" id="391038.Bphy_2487"/>
<dbReference type="KEGG" id="bph:Bphy_2487"/>
<dbReference type="eggNOG" id="COG0150">
    <property type="taxonomic scope" value="Bacteria"/>
</dbReference>
<dbReference type="HOGENOM" id="CLU_047116_0_0_4"/>
<dbReference type="OrthoDB" id="9777881at2"/>
<dbReference type="UniPathway" id="UPA00074">
    <property type="reaction ID" value="UER00129"/>
</dbReference>
<dbReference type="Proteomes" id="UP000001192">
    <property type="component" value="Chromosome 1"/>
</dbReference>
<dbReference type="GO" id="GO:0005829">
    <property type="term" value="C:cytosol"/>
    <property type="evidence" value="ECO:0007669"/>
    <property type="project" value="TreeGrafter"/>
</dbReference>
<dbReference type="GO" id="GO:0005524">
    <property type="term" value="F:ATP binding"/>
    <property type="evidence" value="ECO:0007669"/>
    <property type="project" value="UniProtKB-KW"/>
</dbReference>
<dbReference type="GO" id="GO:0004637">
    <property type="term" value="F:phosphoribosylamine-glycine ligase activity"/>
    <property type="evidence" value="ECO:0007669"/>
    <property type="project" value="TreeGrafter"/>
</dbReference>
<dbReference type="GO" id="GO:0004641">
    <property type="term" value="F:phosphoribosylformylglycinamidine cyclo-ligase activity"/>
    <property type="evidence" value="ECO:0007669"/>
    <property type="project" value="UniProtKB-UniRule"/>
</dbReference>
<dbReference type="GO" id="GO:0006189">
    <property type="term" value="P:'de novo' IMP biosynthetic process"/>
    <property type="evidence" value="ECO:0007669"/>
    <property type="project" value="UniProtKB-UniRule"/>
</dbReference>
<dbReference type="GO" id="GO:0046084">
    <property type="term" value="P:adenine biosynthetic process"/>
    <property type="evidence" value="ECO:0007669"/>
    <property type="project" value="TreeGrafter"/>
</dbReference>
<dbReference type="CDD" id="cd02196">
    <property type="entry name" value="PurM"/>
    <property type="match status" value="1"/>
</dbReference>
<dbReference type="FunFam" id="3.30.1330.10:FF:000001">
    <property type="entry name" value="Phosphoribosylformylglycinamidine cyclo-ligase"/>
    <property type="match status" value="1"/>
</dbReference>
<dbReference type="FunFam" id="3.90.650.10:FF:000001">
    <property type="entry name" value="Phosphoribosylformylglycinamidine cyclo-ligase"/>
    <property type="match status" value="1"/>
</dbReference>
<dbReference type="Gene3D" id="3.90.650.10">
    <property type="entry name" value="PurM-like C-terminal domain"/>
    <property type="match status" value="1"/>
</dbReference>
<dbReference type="Gene3D" id="3.30.1330.10">
    <property type="entry name" value="PurM-like, N-terminal domain"/>
    <property type="match status" value="1"/>
</dbReference>
<dbReference type="HAMAP" id="MF_00741">
    <property type="entry name" value="AIRS"/>
    <property type="match status" value="1"/>
</dbReference>
<dbReference type="InterPro" id="IPR010918">
    <property type="entry name" value="PurM-like_C_dom"/>
</dbReference>
<dbReference type="InterPro" id="IPR036676">
    <property type="entry name" value="PurM-like_C_sf"/>
</dbReference>
<dbReference type="InterPro" id="IPR016188">
    <property type="entry name" value="PurM-like_N"/>
</dbReference>
<dbReference type="InterPro" id="IPR036921">
    <property type="entry name" value="PurM-like_N_sf"/>
</dbReference>
<dbReference type="InterPro" id="IPR004733">
    <property type="entry name" value="PurM_cligase"/>
</dbReference>
<dbReference type="NCBIfam" id="TIGR00878">
    <property type="entry name" value="purM"/>
    <property type="match status" value="1"/>
</dbReference>
<dbReference type="PANTHER" id="PTHR10520:SF12">
    <property type="entry name" value="TRIFUNCTIONAL PURINE BIOSYNTHETIC PROTEIN ADENOSINE-3"/>
    <property type="match status" value="1"/>
</dbReference>
<dbReference type="PANTHER" id="PTHR10520">
    <property type="entry name" value="TRIFUNCTIONAL PURINE BIOSYNTHETIC PROTEIN ADENOSINE-3-RELATED"/>
    <property type="match status" value="1"/>
</dbReference>
<dbReference type="Pfam" id="PF00586">
    <property type="entry name" value="AIRS"/>
    <property type="match status" value="1"/>
</dbReference>
<dbReference type="Pfam" id="PF02769">
    <property type="entry name" value="AIRS_C"/>
    <property type="match status" value="1"/>
</dbReference>
<dbReference type="SUPFAM" id="SSF56042">
    <property type="entry name" value="PurM C-terminal domain-like"/>
    <property type="match status" value="1"/>
</dbReference>
<dbReference type="SUPFAM" id="SSF55326">
    <property type="entry name" value="PurM N-terminal domain-like"/>
    <property type="match status" value="1"/>
</dbReference>
<gene>
    <name evidence="1" type="primary">purM</name>
    <name type="ordered locus">Bphy_2487</name>
</gene>
<feature type="chain" id="PRO_1000193005" description="Phosphoribosylformylglycinamidine cyclo-ligase">
    <location>
        <begin position="1"/>
        <end position="355"/>
    </location>
</feature>
<keyword id="KW-0067">ATP-binding</keyword>
<keyword id="KW-0963">Cytoplasm</keyword>
<keyword id="KW-0436">Ligase</keyword>
<keyword id="KW-0547">Nucleotide-binding</keyword>
<keyword id="KW-0658">Purine biosynthesis</keyword>
<keyword id="KW-1185">Reference proteome</keyword>
<accession>B2JGD2</accession>
<sequence length="355" mass="37173">MNQPKSAPNSPDSAQGLSYRDAGVDIDAGDALVDAIKPFARKTLRDGVLGGIGGFGALFEVPKKYKEPVLVSGTDGVGTKLKLAFTLNRHDTVGQDLVAMSVNDILVQGAEPLFFLDYFACGKLDVGTAATVVKGIAQGCELAGCALIGGETAEMPGMYPDGEYDLAGFAVGAVEKSKIIDGSKIVPGDVVLGLASSGIHSNGYSLVRKIIERAQPDLDADFDGRTLAEALMAPTHIYVKPLLALMQQLEVKGMAHITGGGLVENIPRVLREGLTAELDHRAWPLPPLFAWLQKHGGVADAEMHRVFNCGIGMVVIVSAADADAATGLLAAAGEQVWKIGTVRQSKEGEAQTVVV</sequence>
<reference key="1">
    <citation type="journal article" date="2014" name="Stand. Genomic Sci.">
        <title>Complete genome sequence of Burkholderia phymatum STM815(T), a broad host range and efficient nitrogen-fixing symbiont of Mimosa species.</title>
        <authorList>
            <person name="Moulin L."/>
            <person name="Klonowska A."/>
            <person name="Caroline B."/>
            <person name="Booth K."/>
            <person name="Vriezen J.A."/>
            <person name="Melkonian R."/>
            <person name="James E.K."/>
            <person name="Young J.P."/>
            <person name="Bena G."/>
            <person name="Hauser L."/>
            <person name="Land M."/>
            <person name="Kyrpides N."/>
            <person name="Bruce D."/>
            <person name="Chain P."/>
            <person name="Copeland A."/>
            <person name="Pitluck S."/>
            <person name="Woyke T."/>
            <person name="Lizotte-Waniewski M."/>
            <person name="Bristow J."/>
            <person name="Riley M."/>
        </authorList>
    </citation>
    <scope>NUCLEOTIDE SEQUENCE [LARGE SCALE GENOMIC DNA]</scope>
    <source>
        <strain>DSM 17167 / CIP 108236 / LMG 21445 / STM815</strain>
    </source>
</reference>
<organism>
    <name type="scientific">Paraburkholderia phymatum (strain DSM 17167 / CIP 108236 / LMG 21445 / STM815)</name>
    <name type="common">Burkholderia phymatum</name>
    <dbReference type="NCBI Taxonomy" id="391038"/>
    <lineage>
        <taxon>Bacteria</taxon>
        <taxon>Pseudomonadati</taxon>
        <taxon>Pseudomonadota</taxon>
        <taxon>Betaproteobacteria</taxon>
        <taxon>Burkholderiales</taxon>
        <taxon>Burkholderiaceae</taxon>
        <taxon>Paraburkholderia</taxon>
    </lineage>
</organism>
<name>PUR5_PARP8</name>